<name>RS2_CHLAB</name>
<gene>
    <name evidence="1" type="primary">rpsB</name>
    <name type="ordered locus">CAB047</name>
</gene>
<dbReference type="EMBL" id="CR848038">
    <property type="protein sequence ID" value="CAH63505.1"/>
    <property type="molecule type" value="Genomic_DNA"/>
</dbReference>
<dbReference type="RefSeq" id="WP_011096792.1">
    <property type="nucleotide sequence ID" value="NC_004552.2"/>
</dbReference>
<dbReference type="SMR" id="Q5L763"/>
<dbReference type="GeneID" id="93024590"/>
<dbReference type="KEGG" id="cab:CAB047"/>
<dbReference type="eggNOG" id="COG0052">
    <property type="taxonomic scope" value="Bacteria"/>
</dbReference>
<dbReference type="HOGENOM" id="CLU_040318_1_3_0"/>
<dbReference type="OrthoDB" id="9808036at2"/>
<dbReference type="Proteomes" id="UP000001012">
    <property type="component" value="Chromosome"/>
</dbReference>
<dbReference type="GO" id="GO:0022627">
    <property type="term" value="C:cytosolic small ribosomal subunit"/>
    <property type="evidence" value="ECO:0007669"/>
    <property type="project" value="TreeGrafter"/>
</dbReference>
<dbReference type="GO" id="GO:0003735">
    <property type="term" value="F:structural constituent of ribosome"/>
    <property type="evidence" value="ECO:0007669"/>
    <property type="project" value="InterPro"/>
</dbReference>
<dbReference type="GO" id="GO:0006412">
    <property type="term" value="P:translation"/>
    <property type="evidence" value="ECO:0007669"/>
    <property type="project" value="UniProtKB-UniRule"/>
</dbReference>
<dbReference type="CDD" id="cd01425">
    <property type="entry name" value="RPS2"/>
    <property type="match status" value="1"/>
</dbReference>
<dbReference type="Gene3D" id="3.40.50.10490">
    <property type="entry name" value="Glucose-6-phosphate isomerase like protein, domain 1"/>
    <property type="match status" value="1"/>
</dbReference>
<dbReference type="Gene3D" id="1.10.287.610">
    <property type="entry name" value="Helix hairpin bin"/>
    <property type="match status" value="1"/>
</dbReference>
<dbReference type="HAMAP" id="MF_00291_B">
    <property type="entry name" value="Ribosomal_uS2_B"/>
    <property type="match status" value="1"/>
</dbReference>
<dbReference type="InterPro" id="IPR001865">
    <property type="entry name" value="Ribosomal_uS2"/>
</dbReference>
<dbReference type="InterPro" id="IPR005706">
    <property type="entry name" value="Ribosomal_uS2_bac/mit/plastid"/>
</dbReference>
<dbReference type="InterPro" id="IPR018130">
    <property type="entry name" value="Ribosomal_uS2_CS"/>
</dbReference>
<dbReference type="InterPro" id="IPR023591">
    <property type="entry name" value="Ribosomal_uS2_flav_dom_sf"/>
</dbReference>
<dbReference type="NCBIfam" id="TIGR01011">
    <property type="entry name" value="rpsB_bact"/>
    <property type="match status" value="1"/>
</dbReference>
<dbReference type="PANTHER" id="PTHR12534">
    <property type="entry name" value="30S RIBOSOMAL PROTEIN S2 PROKARYOTIC AND ORGANELLAR"/>
    <property type="match status" value="1"/>
</dbReference>
<dbReference type="PANTHER" id="PTHR12534:SF0">
    <property type="entry name" value="SMALL RIBOSOMAL SUBUNIT PROTEIN US2M"/>
    <property type="match status" value="1"/>
</dbReference>
<dbReference type="Pfam" id="PF00318">
    <property type="entry name" value="Ribosomal_S2"/>
    <property type="match status" value="1"/>
</dbReference>
<dbReference type="PRINTS" id="PR00395">
    <property type="entry name" value="RIBOSOMALS2"/>
</dbReference>
<dbReference type="SUPFAM" id="SSF52313">
    <property type="entry name" value="Ribosomal protein S2"/>
    <property type="match status" value="1"/>
</dbReference>
<dbReference type="PROSITE" id="PS00962">
    <property type="entry name" value="RIBOSOMAL_S2_1"/>
    <property type="match status" value="1"/>
</dbReference>
<dbReference type="PROSITE" id="PS00963">
    <property type="entry name" value="RIBOSOMAL_S2_2"/>
    <property type="match status" value="1"/>
</dbReference>
<feature type="chain" id="PRO_1000003926" description="Small ribosomal subunit protein uS2">
    <location>
        <begin position="1"/>
        <end position="276"/>
    </location>
</feature>
<reference key="1">
    <citation type="journal article" date="2005" name="Genome Res.">
        <title>The Chlamydophila abortus genome sequence reveals an array of variable proteins that contribute to interspecies variation.</title>
        <authorList>
            <person name="Thomson N.R."/>
            <person name="Yeats C."/>
            <person name="Bell K."/>
            <person name="Holden M.T.G."/>
            <person name="Bentley S.D."/>
            <person name="Livingstone M."/>
            <person name="Cerdeno-Tarraga A.-M."/>
            <person name="Harris B."/>
            <person name="Doggett J."/>
            <person name="Ormond D."/>
            <person name="Mungall K."/>
            <person name="Clarke K."/>
            <person name="Feltwell T."/>
            <person name="Hance Z."/>
            <person name="Sanders M."/>
            <person name="Quail M.A."/>
            <person name="Price C."/>
            <person name="Barrell B.G."/>
            <person name="Parkhill J."/>
            <person name="Longbottom D."/>
        </authorList>
    </citation>
    <scope>NUCLEOTIDE SEQUENCE [LARGE SCALE GENOMIC DNA]</scope>
    <source>
        <strain>DSM 27085 / S26/3</strain>
    </source>
</reference>
<keyword id="KW-0687">Ribonucleoprotein</keyword>
<keyword id="KW-0689">Ribosomal protein</keyword>
<comment type="similarity">
    <text evidence="1">Belongs to the universal ribosomal protein uS2 family.</text>
</comment>
<accession>Q5L763</accession>
<sequence length="276" mass="31252">MEEQPLCNLSVKDLMEAGAHFGHQTRRWNPKMKLYIFEEKNGLYIINLAKTLYQLRKALPQVCKVIKENKPILFVGTKKQAKCVIKEAAIEAGEYFVAERWLGGMLTNMTTIRNSIKTLDKIEKDLTQNSSYLTKKEIALLAKRHQKLLKNLEGIRYLKKAPGLVIVVDPSYEKIAVAEAKKLGIPVLALVDTNCDPTPIDYVIPCNDDSLKSIRLIISTIKDSIIDTKKKLGVEIVSPIKTLDIQDSEDMDVYATDEDNRQEDLLAKKYDSNEAN</sequence>
<evidence type="ECO:0000255" key="1">
    <source>
        <dbReference type="HAMAP-Rule" id="MF_00291"/>
    </source>
</evidence>
<evidence type="ECO:0000305" key="2"/>
<organism>
    <name type="scientific">Chlamydia abortus (strain DSM 27085 / S26/3)</name>
    <name type="common">Chlamydophila abortus</name>
    <dbReference type="NCBI Taxonomy" id="218497"/>
    <lineage>
        <taxon>Bacteria</taxon>
        <taxon>Pseudomonadati</taxon>
        <taxon>Chlamydiota</taxon>
        <taxon>Chlamydiia</taxon>
        <taxon>Chlamydiales</taxon>
        <taxon>Chlamydiaceae</taxon>
        <taxon>Chlamydia/Chlamydophila group</taxon>
        <taxon>Chlamydia</taxon>
    </lineage>
</organism>
<proteinExistence type="inferred from homology"/>
<protein>
    <recommendedName>
        <fullName evidence="1">Small ribosomal subunit protein uS2</fullName>
    </recommendedName>
    <alternativeName>
        <fullName evidence="2">30S ribosomal protein S2</fullName>
    </alternativeName>
</protein>